<protein>
    <recommendedName>
        <fullName>Putative HTH-type transcriptional regulator protein PtxE</fullName>
    </recommendedName>
</protein>
<dbReference type="EMBL" id="AF061070">
    <property type="protein sequence ID" value="AAC71710.1"/>
    <property type="molecule type" value="Genomic_DNA"/>
</dbReference>
<dbReference type="SMR" id="O69055"/>
<dbReference type="GO" id="GO:0003700">
    <property type="term" value="F:DNA-binding transcription factor activity"/>
    <property type="evidence" value="ECO:0007669"/>
    <property type="project" value="InterPro"/>
</dbReference>
<dbReference type="GO" id="GO:0000976">
    <property type="term" value="F:transcription cis-regulatory region binding"/>
    <property type="evidence" value="ECO:0007669"/>
    <property type="project" value="TreeGrafter"/>
</dbReference>
<dbReference type="Gene3D" id="3.40.190.10">
    <property type="entry name" value="Periplasmic binding protein-like II"/>
    <property type="match status" value="2"/>
</dbReference>
<dbReference type="Gene3D" id="1.10.10.10">
    <property type="entry name" value="Winged helix-like DNA-binding domain superfamily/Winged helix DNA-binding domain"/>
    <property type="match status" value="1"/>
</dbReference>
<dbReference type="InterPro" id="IPR005119">
    <property type="entry name" value="LysR_subst-bd"/>
</dbReference>
<dbReference type="InterPro" id="IPR000847">
    <property type="entry name" value="Tscrpt_reg_HTH_LysR"/>
</dbReference>
<dbReference type="InterPro" id="IPR036388">
    <property type="entry name" value="WH-like_DNA-bd_sf"/>
</dbReference>
<dbReference type="InterPro" id="IPR036390">
    <property type="entry name" value="WH_DNA-bd_sf"/>
</dbReference>
<dbReference type="PANTHER" id="PTHR30126">
    <property type="entry name" value="HTH-TYPE TRANSCRIPTIONAL REGULATOR"/>
    <property type="match status" value="1"/>
</dbReference>
<dbReference type="PANTHER" id="PTHR30126:SF39">
    <property type="entry name" value="HTH-TYPE TRANSCRIPTIONAL REGULATOR CYSL"/>
    <property type="match status" value="1"/>
</dbReference>
<dbReference type="Pfam" id="PF00126">
    <property type="entry name" value="HTH_1"/>
    <property type="match status" value="1"/>
</dbReference>
<dbReference type="Pfam" id="PF03466">
    <property type="entry name" value="LysR_substrate"/>
    <property type="match status" value="1"/>
</dbReference>
<dbReference type="PRINTS" id="PR00039">
    <property type="entry name" value="HTHLYSR"/>
</dbReference>
<dbReference type="SUPFAM" id="SSF53850">
    <property type="entry name" value="Periplasmic binding protein-like II"/>
    <property type="match status" value="1"/>
</dbReference>
<dbReference type="SUPFAM" id="SSF46785">
    <property type="entry name" value="Winged helix' DNA-binding domain"/>
    <property type="match status" value="1"/>
</dbReference>
<dbReference type="PROSITE" id="PS50931">
    <property type="entry name" value="HTH_LYSR"/>
    <property type="match status" value="1"/>
</dbReference>
<feature type="chain" id="PRO_0000105745" description="Putative HTH-type transcriptional regulator protein PtxE">
    <location>
        <begin position="1"/>
        <end position="196" status="greater than"/>
    </location>
</feature>
<feature type="domain" description="HTH lysR-type" evidence="1">
    <location>
        <begin position="1"/>
        <end position="59"/>
    </location>
</feature>
<feature type="DNA-binding region" description="H-T-H motif" evidence="1">
    <location>
        <begin position="19"/>
        <end position="38"/>
    </location>
</feature>
<feature type="non-terminal residue">
    <location>
        <position position="196"/>
    </location>
</feature>
<accession>O69055</accession>
<reference key="1">
    <citation type="journal article" date="1998" name="J. Bacteriol.">
        <title>Molecular genetic analysis of phosphite and hypophosphite oxidation by Pseudomonas stutzeri WM88.</title>
        <authorList>
            <person name="Metcalf W.W."/>
            <person name="Wolfe R.S."/>
        </authorList>
    </citation>
    <scope>NUCLEOTIDE SEQUENCE [GENOMIC DNA]</scope>
    <source>
        <strain>WM88</strain>
    </source>
</reference>
<proteinExistence type="inferred from homology"/>
<gene>
    <name type="primary">ptxE</name>
</gene>
<comment type="similarity">
    <text evidence="2">Belongs to the LysR transcriptional regulatory family.</text>
</comment>
<name>PTXE_STUST</name>
<evidence type="ECO:0000255" key="1">
    <source>
        <dbReference type="PROSITE-ProRule" id="PRU00253"/>
    </source>
</evidence>
<evidence type="ECO:0000305" key="2"/>
<organism>
    <name type="scientific">Stutzerimonas stutzeri</name>
    <name type="common">Pseudomonas stutzeri</name>
    <dbReference type="NCBI Taxonomy" id="316"/>
    <lineage>
        <taxon>Bacteria</taxon>
        <taxon>Pseudomonadati</taxon>
        <taxon>Pseudomonadota</taxon>
        <taxon>Gammaproteobacteria</taxon>
        <taxon>Pseudomonadales</taxon>
        <taxon>Pseudomonadaceae</taxon>
        <taxon>Stutzerimonas</taxon>
    </lineage>
</organism>
<sequence length="196" mass="21464">MLNPVWLKSLVAIVQTGSFQSAARALGLAQPTVSQHLQKLEEQVGVTLVQRSRSGCQPTTRALAFMPHATALLDMHARALEALHGNRERVGASSNIGTYLLQPFVRNYLTTANERGEVDLRIAANPDVADQLLAGQLDAAIMEWWLPHPDFEYRLWRVEPLVLIVSPDHALAEAGCIERDRLVDLPMLGGEPGSGT</sequence>
<keyword id="KW-0238">DNA-binding</keyword>
<keyword id="KW-0804">Transcription</keyword>
<keyword id="KW-0805">Transcription regulation</keyword>